<accession>P09218</accession>
<dbReference type="EMBL" id="X07804">
    <property type="protein sequence ID" value="CAA30648.1"/>
    <property type="molecule type" value="Genomic_DNA"/>
</dbReference>
<dbReference type="EMDB" id="EMD-9334"/>
<dbReference type="EMDB" id="EMD-9335"/>
<dbReference type="SMR" id="P09218"/>
<dbReference type="TCDB" id="3.A.2.1.14">
    <property type="family name" value="the h+- or na+-translocating f-type, v-type and a-type atpase (f-atpase) superfamily"/>
</dbReference>
<dbReference type="GO" id="GO:0005886">
    <property type="term" value="C:plasma membrane"/>
    <property type="evidence" value="ECO:0007669"/>
    <property type="project" value="UniProtKB-SubCell"/>
</dbReference>
<dbReference type="GO" id="GO:0045259">
    <property type="term" value="C:proton-transporting ATP synthase complex"/>
    <property type="evidence" value="ECO:0007669"/>
    <property type="project" value="UniProtKB-KW"/>
</dbReference>
<dbReference type="GO" id="GO:0046933">
    <property type="term" value="F:proton-transporting ATP synthase activity, rotational mechanism"/>
    <property type="evidence" value="ECO:0007669"/>
    <property type="project" value="UniProtKB-UniRule"/>
</dbReference>
<dbReference type="GO" id="GO:0042777">
    <property type="term" value="P:proton motive force-driven plasma membrane ATP synthesis"/>
    <property type="evidence" value="ECO:0007669"/>
    <property type="project" value="TreeGrafter"/>
</dbReference>
<dbReference type="CDD" id="cd00310">
    <property type="entry name" value="ATP-synt_Fo_a_6"/>
    <property type="match status" value="1"/>
</dbReference>
<dbReference type="FunFam" id="1.20.120.220:FF:000005">
    <property type="entry name" value="ATP synthase subunit a"/>
    <property type="match status" value="1"/>
</dbReference>
<dbReference type="Gene3D" id="1.20.120.220">
    <property type="entry name" value="ATP synthase, F0 complex, subunit A"/>
    <property type="match status" value="1"/>
</dbReference>
<dbReference type="HAMAP" id="MF_01393">
    <property type="entry name" value="ATP_synth_a_bact"/>
    <property type="match status" value="1"/>
</dbReference>
<dbReference type="InterPro" id="IPR045082">
    <property type="entry name" value="ATP_syn_F0_a_bact/chloroplast"/>
</dbReference>
<dbReference type="InterPro" id="IPR000568">
    <property type="entry name" value="ATP_synth_F0_asu"/>
</dbReference>
<dbReference type="InterPro" id="IPR023011">
    <property type="entry name" value="ATP_synth_F0_asu_AS"/>
</dbReference>
<dbReference type="InterPro" id="IPR035908">
    <property type="entry name" value="F0_ATP_A_sf"/>
</dbReference>
<dbReference type="NCBIfam" id="TIGR01131">
    <property type="entry name" value="ATP_synt_6_or_A"/>
    <property type="match status" value="1"/>
</dbReference>
<dbReference type="NCBIfam" id="NF004479">
    <property type="entry name" value="PRK05815.1-4"/>
    <property type="match status" value="1"/>
</dbReference>
<dbReference type="PANTHER" id="PTHR42823">
    <property type="entry name" value="ATP SYNTHASE SUBUNIT A, CHLOROPLASTIC"/>
    <property type="match status" value="1"/>
</dbReference>
<dbReference type="PANTHER" id="PTHR42823:SF3">
    <property type="entry name" value="ATP SYNTHASE SUBUNIT A, CHLOROPLASTIC"/>
    <property type="match status" value="1"/>
</dbReference>
<dbReference type="Pfam" id="PF00119">
    <property type="entry name" value="ATP-synt_A"/>
    <property type="match status" value="1"/>
</dbReference>
<dbReference type="PRINTS" id="PR00123">
    <property type="entry name" value="ATPASEA"/>
</dbReference>
<dbReference type="SUPFAM" id="SSF81336">
    <property type="entry name" value="F1F0 ATP synthase subunit A"/>
    <property type="match status" value="1"/>
</dbReference>
<dbReference type="PROSITE" id="PS00449">
    <property type="entry name" value="ATPASE_A"/>
    <property type="match status" value="1"/>
</dbReference>
<gene>
    <name evidence="1" type="primary">atpB</name>
</gene>
<evidence type="ECO:0000255" key="1">
    <source>
        <dbReference type="HAMAP-Rule" id="MF_01393"/>
    </source>
</evidence>
<evidence type="ECO:0000269" key="2">
    <source>
    </source>
</evidence>
<reference key="1">
    <citation type="journal article" date="1988" name="Biochim. Biophys. Acta">
        <title>Sequence and over-expression of subunits of adenosine triphosphate synthase in thermophilic bacterium PS3.</title>
        <authorList>
            <person name="Ohta S."/>
            <person name="Yohda M."/>
            <person name="Ishizuka M."/>
            <person name="Hirata H."/>
            <person name="Hamamoto T."/>
            <person name="Otawara-Hamamoto Y."/>
            <person name="Matsuda K."/>
            <person name="Kagawa Y."/>
        </authorList>
    </citation>
    <scope>NUCLEOTIDE SEQUENCE [GENOMIC DNA]</scope>
    <scope>PROTEIN SEQUENCE OF 1-15</scope>
    <scope>SUBUNIT</scope>
</reference>
<keyword id="KW-0066">ATP synthesis</keyword>
<keyword id="KW-1003">Cell membrane</keyword>
<keyword id="KW-0138">CF(0)</keyword>
<keyword id="KW-0903">Direct protein sequencing</keyword>
<keyword id="KW-0375">Hydrogen ion transport</keyword>
<keyword id="KW-0406">Ion transport</keyword>
<keyword id="KW-0472">Membrane</keyword>
<keyword id="KW-0812">Transmembrane</keyword>
<keyword id="KW-1133">Transmembrane helix</keyword>
<keyword id="KW-0813">Transport</keyword>
<name>ATP6_BACP3</name>
<comment type="function">
    <text evidence="1">Key component of the proton channel; it plays a direct role in the translocation of protons across the membrane.</text>
</comment>
<comment type="subunit">
    <text evidence="1 2">F-type ATPases have 2 components, CF(1) - the catalytic core - and CF(0) - the membrane proton channel. CF(1) has five subunits: alpha(3), beta(3), gamma(1), delta(1), epsilon(1). CF(0) has three main subunits: a(1), b(2) and c(9-12). The alpha and beta chains form an alternating ring which encloses part of the gamma chain. CF(1) is attached to CF(0) by a central stalk formed by the gamma and epsilon chains, while a peripheral stalk is formed by the delta and b chains.</text>
</comment>
<comment type="subcellular location">
    <subcellularLocation>
        <location evidence="1">Cell membrane</location>
        <topology evidence="1">Multi-pass membrane protein</topology>
    </subcellularLocation>
</comment>
<comment type="similarity">
    <text evidence="1">Belongs to the ATPase A chain family.</text>
</comment>
<sequence length="238" mass="26590">MEHKAPLVEFLGLTFNLSDMLMITITCLIVFIIAVAATRSLQLRPTGMQNFMEWVFDFVRGIINSTMDWQTGGRFLTLGVTLIMYVFVANMLGLPFSVHVNGELWWKSPTADATVTLTLAVMVVALTHYYGVKMKGASDYLRDYTRPVAWLFPLKIIEEFANTLTLGLRLFGNIYAGEILLGLLASLGTHYGVLGAVGASQFPIMVWQAFSIFVGTIQAFIFTMLTMVYMAHKVSHDH</sequence>
<feature type="chain" id="PRO_0000082046" description="ATP synthase subunit a">
    <location>
        <begin position="1"/>
        <end position="238"/>
    </location>
</feature>
<feature type="transmembrane region" description="Helical" evidence="1">
    <location>
        <begin position="17"/>
        <end position="37"/>
    </location>
</feature>
<feature type="transmembrane region" description="Helical" evidence="1">
    <location>
        <begin position="75"/>
        <end position="95"/>
    </location>
</feature>
<feature type="transmembrane region" description="Helical" evidence="1">
    <location>
        <begin position="112"/>
        <end position="132"/>
    </location>
</feature>
<feature type="transmembrane region" description="Helical" evidence="1">
    <location>
        <begin position="179"/>
        <end position="199"/>
    </location>
</feature>
<feature type="transmembrane region" description="Helical" evidence="1">
    <location>
        <begin position="202"/>
        <end position="222"/>
    </location>
</feature>
<organism>
    <name type="scientific">Bacillus sp. (strain PS3)</name>
    <dbReference type="NCBI Taxonomy" id="2334"/>
    <lineage>
        <taxon>Bacteria</taxon>
        <taxon>Bacillati</taxon>
        <taxon>Bacillota</taxon>
        <taxon>Bacilli</taxon>
        <taxon>Bacillales</taxon>
        <taxon>Bacillaceae</taxon>
        <taxon>Bacillus</taxon>
    </lineage>
</organism>
<proteinExistence type="evidence at protein level"/>
<protein>
    <recommendedName>
        <fullName evidence="1">ATP synthase subunit a</fullName>
    </recommendedName>
    <alternativeName>
        <fullName evidence="1">ATP synthase F0 sector subunit a</fullName>
    </alternativeName>
    <alternativeName>
        <fullName evidence="1">F-ATPase subunit 6</fullName>
    </alternativeName>
</protein>